<keyword id="KW-0249">Electron transport</keyword>
<keyword id="KW-0472">Membrane</keyword>
<keyword id="KW-0496">Mitochondrion</keyword>
<keyword id="KW-0999">Mitochondrion inner membrane</keyword>
<keyword id="KW-0520">NAD</keyword>
<keyword id="KW-0679">Respiratory chain</keyword>
<keyword id="KW-1278">Translocase</keyword>
<keyword id="KW-0812">Transmembrane</keyword>
<keyword id="KW-1133">Transmembrane helix</keyword>
<keyword id="KW-0813">Transport</keyword>
<keyword id="KW-0830">Ubiquinone</keyword>
<geneLocation type="mitochondrion"/>
<protein>
    <recommendedName>
        <fullName>NADH-ubiquinone oxidoreductase chain 4L</fullName>
        <ecNumber>7.1.1.2</ecNumber>
    </recommendedName>
    <alternativeName>
        <fullName>NADH dehydrogenase subunit 4L</fullName>
    </alternativeName>
</protein>
<gene>
    <name type="primary">MT-ND4L</name>
    <name type="synonym">MTND4L</name>
    <name type="synonym">NADH4L</name>
    <name type="synonym">ND4L</name>
</gene>
<name>NU4LM_STERU</name>
<accession>Q1HV53</accession>
<sequence length="98" mass="10949">MSLTYMNMFMAFTISLLGLLMYRSHMMSSLLCLEGMMLSLFVMMTMTILNTHLTLASMLPIILLVFAACEAALGLSLLVMVSTTYGMDYVQNLNLLQC</sequence>
<evidence type="ECO:0000250" key="1">
    <source>
        <dbReference type="UniProtKB" id="P03901"/>
    </source>
</evidence>
<evidence type="ECO:0000250" key="2">
    <source>
        <dbReference type="UniProtKB" id="P03902"/>
    </source>
</evidence>
<evidence type="ECO:0000255" key="3"/>
<evidence type="ECO:0000305" key="4"/>
<reference key="1">
    <citation type="journal article" date="2006" name="Mol. Phylogenet. Evol.">
        <title>Molecular systematics of Vampyressine bats (Phyllostomidae: Stenodermatinae) with comparison of direct and indirect surveys of mitochondrial DNA variation.</title>
        <authorList>
            <person name="Hoofer S.R."/>
            <person name="Baker R.J."/>
        </authorList>
    </citation>
    <scope>NUCLEOTIDE SEQUENCE [GENOMIC DNA]</scope>
</reference>
<proteinExistence type="inferred from homology"/>
<dbReference type="EC" id="7.1.1.2"/>
<dbReference type="EMBL" id="DQ312364">
    <property type="protein sequence ID" value="ABC47508.1"/>
    <property type="molecule type" value="Genomic_DNA"/>
</dbReference>
<dbReference type="SMR" id="Q1HV53"/>
<dbReference type="GO" id="GO:0005743">
    <property type="term" value="C:mitochondrial inner membrane"/>
    <property type="evidence" value="ECO:0000250"/>
    <property type="project" value="UniProtKB"/>
</dbReference>
<dbReference type="GO" id="GO:0045271">
    <property type="term" value="C:respiratory chain complex I"/>
    <property type="evidence" value="ECO:0000250"/>
    <property type="project" value="UniProtKB"/>
</dbReference>
<dbReference type="GO" id="GO:0008137">
    <property type="term" value="F:NADH dehydrogenase (ubiquinone) activity"/>
    <property type="evidence" value="ECO:0000250"/>
    <property type="project" value="UniProtKB"/>
</dbReference>
<dbReference type="GO" id="GO:0042773">
    <property type="term" value="P:ATP synthesis coupled electron transport"/>
    <property type="evidence" value="ECO:0007669"/>
    <property type="project" value="InterPro"/>
</dbReference>
<dbReference type="FunFam" id="1.10.287.3510:FF:000002">
    <property type="entry name" value="NADH-ubiquinone oxidoreductase chain 4L"/>
    <property type="match status" value="1"/>
</dbReference>
<dbReference type="Gene3D" id="1.10.287.3510">
    <property type="match status" value="1"/>
</dbReference>
<dbReference type="InterPro" id="IPR001133">
    <property type="entry name" value="NADH_UbQ_OxRdtase_chain4L/K"/>
</dbReference>
<dbReference type="InterPro" id="IPR039428">
    <property type="entry name" value="NUOK/Mnh_C1-like"/>
</dbReference>
<dbReference type="PANTHER" id="PTHR11434:SF0">
    <property type="entry name" value="NADH-UBIQUINONE OXIDOREDUCTASE CHAIN 4L"/>
    <property type="match status" value="1"/>
</dbReference>
<dbReference type="PANTHER" id="PTHR11434">
    <property type="entry name" value="NADH-UBIQUINONE OXIDOREDUCTASE SUBUNIT ND4L"/>
    <property type="match status" value="1"/>
</dbReference>
<dbReference type="Pfam" id="PF00420">
    <property type="entry name" value="Oxidored_q2"/>
    <property type="match status" value="1"/>
</dbReference>
<organism>
    <name type="scientific">Stenoderma rufum</name>
    <name type="common">Red fruit bat</name>
    <name type="synonym">Desmarest's red fig-eating bat</name>
    <dbReference type="NCBI Taxonomy" id="148093"/>
    <lineage>
        <taxon>Eukaryota</taxon>
        <taxon>Metazoa</taxon>
        <taxon>Chordata</taxon>
        <taxon>Craniata</taxon>
        <taxon>Vertebrata</taxon>
        <taxon>Euteleostomi</taxon>
        <taxon>Mammalia</taxon>
        <taxon>Eutheria</taxon>
        <taxon>Laurasiatheria</taxon>
        <taxon>Chiroptera</taxon>
        <taxon>Yangochiroptera</taxon>
        <taxon>Phyllostomidae</taxon>
        <taxon>Stenodermatinae</taxon>
        <taxon>Stenoderma</taxon>
    </lineage>
</organism>
<comment type="function">
    <text evidence="1">Core subunit of the mitochondrial membrane respiratory chain NADH dehydrogenase (Complex I) which catalyzes electron transfer from NADH through the respiratory chain, using ubiquinone as an electron acceptor. Part of the enzyme membrane arm which is embedded in the lipid bilayer and involved in proton translocation.</text>
</comment>
<comment type="catalytic activity">
    <reaction evidence="1">
        <text>a ubiquinone + NADH + 5 H(+)(in) = a ubiquinol + NAD(+) + 4 H(+)(out)</text>
        <dbReference type="Rhea" id="RHEA:29091"/>
        <dbReference type="Rhea" id="RHEA-COMP:9565"/>
        <dbReference type="Rhea" id="RHEA-COMP:9566"/>
        <dbReference type="ChEBI" id="CHEBI:15378"/>
        <dbReference type="ChEBI" id="CHEBI:16389"/>
        <dbReference type="ChEBI" id="CHEBI:17976"/>
        <dbReference type="ChEBI" id="CHEBI:57540"/>
        <dbReference type="ChEBI" id="CHEBI:57945"/>
        <dbReference type="EC" id="7.1.1.2"/>
    </reaction>
    <physiologicalReaction direction="left-to-right" evidence="1">
        <dbReference type="Rhea" id="RHEA:29092"/>
    </physiologicalReaction>
</comment>
<comment type="subunit">
    <text evidence="2">Core subunit of respiratory chain NADH dehydrogenase (Complex I) which is composed of 45 different subunits.</text>
</comment>
<comment type="subcellular location">
    <subcellularLocation>
        <location evidence="2">Mitochondrion inner membrane</location>
        <topology evidence="3">Multi-pass membrane protein</topology>
    </subcellularLocation>
</comment>
<comment type="similarity">
    <text evidence="4">Belongs to the complex I subunit 4L family.</text>
</comment>
<feature type="chain" id="PRO_0000256653" description="NADH-ubiquinone oxidoreductase chain 4L">
    <location>
        <begin position="1"/>
        <end position="98"/>
    </location>
</feature>
<feature type="transmembrane region" description="Helical" evidence="3">
    <location>
        <begin position="1"/>
        <end position="21"/>
    </location>
</feature>
<feature type="transmembrane region" description="Helical" evidence="3">
    <location>
        <begin position="29"/>
        <end position="49"/>
    </location>
</feature>
<feature type="transmembrane region" description="Helical" evidence="3">
    <location>
        <begin position="61"/>
        <end position="81"/>
    </location>
</feature>